<feature type="signal peptide" evidence="2">
    <location>
        <begin position="1"/>
        <end position="20"/>
    </location>
</feature>
<feature type="chain" id="PRO_0000022528" description="Retinoic acid receptor responder protein 2">
    <location>
        <begin position="21"/>
        <end position="157"/>
    </location>
</feature>
<feature type="propeptide" id="PRO_0000424869" evidence="1">
    <location>
        <begin position="158"/>
        <end position="163"/>
    </location>
</feature>
<feature type="disulfide bond" evidence="1">
    <location>
        <begin position="79"/>
        <end position="89"/>
    </location>
</feature>
<feature type="disulfide bond" evidence="1">
    <location>
        <begin position="100"/>
        <end position="119"/>
    </location>
</feature>
<feature type="disulfide bond" evidence="4">
    <location>
        <begin position="103"/>
        <end position="135"/>
    </location>
</feature>
<keyword id="KW-0145">Chemotaxis</keyword>
<keyword id="KW-0221">Differentiation</keyword>
<keyword id="KW-1015">Disulfide bond</keyword>
<keyword id="KW-0395">Inflammatory response</keyword>
<keyword id="KW-0964">Secreted</keyword>
<keyword id="KW-0732">Signal</keyword>
<proteinExistence type="evidence at transcript level"/>
<comment type="function">
    <text evidence="2">Adipocyte-secreted protein (adipokine) that regulates adipogenesis, metabolism and inflammation through activation of the chemokine-like receptor 1 (CMKLR1). Also acts as a ligand for CMKLR2. Can also bind to C-C chemokine receptor-like 2 (CCRL2), but with a lower affinity than it does to CMKLR1 or CMKLR2. Positively regulates adipocyte differentiation, modulates the expression of adipocyte genes involved in lipid and glucose metabolism and might play a role in angiogenesis, a process essential for the expansion of white adipose tissue. Also acts as a pro-inflammatory adipokine, causing an increase in secretion of pro-inflammatory and prodiabetic adipokines, which further impair adipose tissue metabolic function and have negative systemic effects including impaired insulin sensitivity, altered glucose and lipid metabolism, and a decrease in vascular function in other tissues. Can have both pro- and anti-inflammatory properties depending on the modality of enzymatic cleavage by different classes of proteases. Acts as a chemotactic factor for leukocyte populations expressing CMKLR1, particularly immature plasmacytoid dendritic cells, but also immature myeloid DCs, macrophages and natural killer cells. Exerts an anti-inflammatory role by preventing TNF/TNFA-induced VCAM1 expression and monocytes adhesion in vascular endothelial cells. The effect is mediated via inhibiting activation of NF-kappa-B and CRK/p38 through stimulation of AKT1/NOS3 signaling and nitric oxide production. Its dual role in inflammation and metabolism might provide a link Exhibits an antimicrobial function in the skin (By similarity).</text>
</comment>
<comment type="subcellular location">
    <subcellularLocation>
        <location evidence="3">Secreted</location>
    </subcellularLocation>
</comment>
<comment type="PTM">
    <text evidence="2">Secreted in an inactive precursor form, prochemerin, which is proteolytically processed by a variety of extracellular proteases to generate forms with differing levels of bioactivity. For example, the removal of six amino acids results in chemerin-157, which exhibits the highest activity, while removal of seven amino acids results in chemerin-156 which has slightly less activity. Some proteases are able to cleave at more than one site and chemerin forms may be sequentially processed by different enzymes to modulate activity levels. The coordinated expression and activity of chemerin-modifying enzymes is essential for regulating its bioactivation, inactivation and, consequently, biological function. Cathepsin G cleaves seven C-terminal amino acids from prochemerin (chemerin-156), elastase is able to cleave six (chemerin-157), eight (chemerin-155) or eleven (chemerin-152), plasmin cleaves five amino acids (chemerin-158), and tryptase cleaves five (chemerin-158) or eight (chemerin-155). Multiple cleavages might be required to fully activate chemerin, with an initial tryptase cleavage resulting in chemerin with low activity (chemerin-158), and a second cleavage by carboxypeptidase N or B producing highly active chemerin (chemerin-157).</text>
</comment>
<gene>
    <name type="primary">RARRES2</name>
    <name type="synonym">TIG2</name>
</gene>
<dbReference type="EMBL" id="AB089674">
    <property type="protein sequence ID" value="BAC45229.1"/>
    <property type="molecule type" value="mRNA"/>
</dbReference>
<dbReference type="RefSeq" id="NP_001231216.1">
    <property type="nucleotide sequence ID" value="NM_001244287.1"/>
</dbReference>
<dbReference type="SMR" id="Q8HDG8"/>
<dbReference type="PaxDb" id="10029-NP_001231216.1"/>
<dbReference type="GeneID" id="100689253"/>
<dbReference type="KEGG" id="cge:100689253"/>
<dbReference type="CTD" id="5919"/>
<dbReference type="eggNOG" id="ENOG502SE7C">
    <property type="taxonomic scope" value="Eukaryota"/>
</dbReference>
<dbReference type="OrthoDB" id="9894305at2759"/>
<dbReference type="Proteomes" id="UP000694386">
    <property type="component" value="Unplaced"/>
</dbReference>
<dbReference type="Proteomes" id="UP001108280">
    <property type="component" value="Chromosome 8"/>
</dbReference>
<dbReference type="GO" id="GO:0031012">
    <property type="term" value="C:extracellular matrix"/>
    <property type="evidence" value="ECO:0007669"/>
    <property type="project" value="TreeGrafter"/>
</dbReference>
<dbReference type="GO" id="GO:0005576">
    <property type="term" value="C:extracellular region"/>
    <property type="evidence" value="ECO:0000250"/>
    <property type="project" value="UniProtKB"/>
</dbReference>
<dbReference type="GO" id="GO:0005615">
    <property type="term" value="C:extracellular space"/>
    <property type="evidence" value="ECO:0007669"/>
    <property type="project" value="TreeGrafter"/>
</dbReference>
<dbReference type="GO" id="GO:0005102">
    <property type="term" value="F:signaling receptor binding"/>
    <property type="evidence" value="ECO:0007669"/>
    <property type="project" value="InterPro"/>
</dbReference>
<dbReference type="GO" id="GO:0030154">
    <property type="term" value="P:cell differentiation"/>
    <property type="evidence" value="ECO:0007669"/>
    <property type="project" value="UniProtKB-KW"/>
</dbReference>
<dbReference type="GO" id="GO:0006935">
    <property type="term" value="P:chemotaxis"/>
    <property type="evidence" value="ECO:0007669"/>
    <property type="project" value="UniProtKB-KW"/>
</dbReference>
<dbReference type="GO" id="GO:0006954">
    <property type="term" value="P:inflammatory response"/>
    <property type="evidence" value="ECO:0007669"/>
    <property type="project" value="UniProtKB-KW"/>
</dbReference>
<dbReference type="GO" id="GO:0045087">
    <property type="term" value="P:innate immune response"/>
    <property type="evidence" value="ECO:0007669"/>
    <property type="project" value="TreeGrafter"/>
</dbReference>
<dbReference type="GO" id="GO:0050921">
    <property type="term" value="P:positive regulation of chemotaxis"/>
    <property type="evidence" value="ECO:0000250"/>
    <property type="project" value="UniProtKB"/>
</dbReference>
<dbReference type="GO" id="GO:0045600">
    <property type="term" value="P:positive regulation of fat cell differentiation"/>
    <property type="evidence" value="ECO:0000250"/>
    <property type="project" value="UniProtKB"/>
</dbReference>
<dbReference type="GO" id="GO:0001934">
    <property type="term" value="P:positive regulation of protein phosphorylation"/>
    <property type="evidence" value="ECO:0000250"/>
    <property type="project" value="UniProtKB"/>
</dbReference>
<dbReference type="GO" id="GO:0046626">
    <property type="term" value="P:regulation of insulin receptor signaling pathway"/>
    <property type="evidence" value="ECO:0000250"/>
    <property type="project" value="UniProtKB"/>
</dbReference>
<dbReference type="GO" id="GO:0050994">
    <property type="term" value="P:regulation of lipid catabolic process"/>
    <property type="evidence" value="ECO:0000250"/>
    <property type="project" value="UniProtKB"/>
</dbReference>
<dbReference type="FunFam" id="3.10.450.10:FF:000014">
    <property type="entry name" value="Retinoic acid receptor responder 2"/>
    <property type="match status" value="1"/>
</dbReference>
<dbReference type="Gene3D" id="3.10.450.10">
    <property type="match status" value="1"/>
</dbReference>
<dbReference type="InterPro" id="IPR029562">
    <property type="entry name" value="Chemerin"/>
</dbReference>
<dbReference type="InterPro" id="IPR046350">
    <property type="entry name" value="Cystatin_sf"/>
</dbReference>
<dbReference type="PANTHER" id="PTHR15106">
    <property type="entry name" value="RETINOIC ACID RECEPTOR RESPONDER PROTEIN 2"/>
    <property type="match status" value="1"/>
</dbReference>
<dbReference type="PANTHER" id="PTHR15106:SF2">
    <property type="entry name" value="RETINOIC ACID RECEPTOR RESPONDER PROTEIN 2"/>
    <property type="match status" value="1"/>
</dbReference>
<dbReference type="SUPFAM" id="SSF54403">
    <property type="entry name" value="Cystatin/monellin"/>
    <property type="match status" value="1"/>
</dbReference>
<protein>
    <recommendedName>
        <fullName>Retinoic acid receptor responder protein 2</fullName>
    </recommendedName>
    <alternativeName>
        <fullName>Chemerin</fullName>
    </alternativeName>
    <alternativeName>
        <fullName>RAR-responsive protein TIG2</fullName>
    </alternativeName>
    <alternativeName>
        <fullName>Tazarotene-induced gene 2 protein</fullName>
    </alternativeName>
</protein>
<organism>
    <name type="scientific">Cricetulus griseus</name>
    <name type="common">Chinese hamster</name>
    <name type="synonym">Cricetulus barabensis griseus</name>
    <dbReference type="NCBI Taxonomy" id="10029"/>
    <lineage>
        <taxon>Eukaryota</taxon>
        <taxon>Metazoa</taxon>
        <taxon>Chordata</taxon>
        <taxon>Craniata</taxon>
        <taxon>Vertebrata</taxon>
        <taxon>Euteleostomi</taxon>
        <taxon>Mammalia</taxon>
        <taxon>Eutheria</taxon>
        <taxon>Euarchontoglires</taxon>
        <taxon>Glires</taxon>
        <taxon>Rodentia</taxon>
        <taxon>Myomorpha</taxon>
        <taxon>Muroidea</taxon>
        <taxon>Cricetidae</taxon>
        <taxon>Cricetinae</taxon>
        <taxon>Cricetulus</taxon>
    </lineage>
</organism>
<reference key="1">
    <citation type="journal article" date="2003" name="J. Biol. Chem.">
        <title>Genes modulated by expression of GD3 synthase in Chinese hamster ovary cells. Evidence that the Tis21 gene is involved in the induction of GD3 9-O-acetylation.</title>
        <authorList>
            <person name="Satake H."/>
            <person name="Chen H.Y."/>
            <person name="Varki A."/>
        </authorList>
    </citation>
    <scope>NUCLEOTIDE SEQUENCE [MRNA]</scope>
</reference>
<accession>Q8HDG8</accession>
<evidence type="ECO:0000250" key="1"/>
<evidence type="ECO:0000250" key="2">
    <source>
        <dbReference type="UniProtKB" id="Q99969"/>
    </source>
</evidence>
<evidence type="ECO:0000250" key="3">
    <source>
        <dbReference type="UniProtKB" id="Q9DD06"/>
    </source>
</evidence>
<evidence type="ECO:0000255" key="4"/>
<sequence length="163" mass="18707">MKYLLISLALWLGMVGIHGTELELSETQRRGLQVALEEFHKHPPVQWAFQEIGVDNANDMVFSAGTFVRLEFKLQQTSCFKKDWKNPECKIKANGRKRKCLACIKLDPRGKVLGRMVHCPILKQGLQQELQESQCNRITQAGEDPRSHFFPGQFAFSRALKHK</sequence>
<name>RARR2_CRIGR</name>